<name>HIS6_XYLF2</name>
<reference key="1">
    <citation type="journal article" date="2010" name="J. Bacteriol.">
        <title>Whole genome sequences of two Xylella fastidiosa strains (M12 and M23) causing almond leaf scorch disease in California.</title>
        <authorList>
            <person name="Chen J."/>
            <person name="Xie G."/>
            <person name="Han S."/>
            <person name="Chertkov O."/>
            <person name="Sims D."/>
            <person name="Civerolo E.L."/>
        </authorList>
    </citation>
    <scope>NUCLEOTIDE SEQUENCE [LARGE SCALE GENOMIC DNA]</scope>
    <source>
        <strain>M23</strain>
    </source>
</reference>
<protein>
    <recommendedName>
        <fullName evidence="1">Imidazole glycerol phosphate synthase subunit HisF</fullName>
        <ecNumber evidence="1">4.3.2.10</ecNumber>
    </recommendedName>
    <alternativeName>
        <fullName evidence="1">IGP synthase cyclase subunit</fullName>
    </alternativeName>
    <alternativeName>
        <fullName evidence="1">IGP synthase subunit HisF</fullName>
    </alternativeName>
    <alternativeName>
        <fullName evidence="1">ImGP synthase subunit HisF</fullName>
        <shortName evidence="1">IGPS subunit HisF</shortName>
    </alternativeName>
</protein>
<proteinExistence type="inferred from homology"/>
<accession>B2I5X6</accession>
<gene>
    <name evidence="1" type="primary">hisF</name>
    <name type="ordered locus">XfasM23_1347</name>
</gene>
<sequence>MLSRRIIPCLDVRDGRVVKGVKFRDHVDMGDIVELALRYRDHGADELVFYDIGASPQGRSVDYRWVERVARLIDIPFCVAGGIGEVETARAVLHAGADKISINSPALRQPALISALAEAFGVQCVVVGIDSIREADGQWRVRCNTGDPDKTQALPLRTLDWIVEAQRLGAGEIVLNCMDSDGVRCGYDIAQLSQARALCQVPLVASGGAGDMQHFADVFHKADVDGALAASVFHSGAISIPGLKQFLREQQIEVRDV</sequence>
<feature type="chain" id="PRO_1000135061" description="Imidazole glycerol phosphate synthase subunit HisF">
    <location>
        <begin position="1"/>
        <end position="257"/>
    </location>
</feature>
<feature type="active site" evidence="1">
    <location>
        <position position="11"/>
    </location>
</feature>
<feature type="active site" evidence="1">
    <location>
        <position position="130"/>
    </location>
</feature>
<organism>
    <name type="scientific">Xylella fastidiosa (strain M23)</name>
    <dbReference type="NCBI Taxonomy" id="405441"/>
    <lineage>
        <taxon>Bacteria</taxon>
        <taxon>Pseudomonadati</taxon>
        <taxon>Pseudomonadota</taxon>
        <taxon>Gammaproteobacteria</taxon>
        <taxon>Lysobacterales</taxon>
        <taxon>Lysobacteraceae</taxon>
        <taxon>Xylella</taxon>
    </lineage>
</organism>
<comment type="function">
    <text evidence="1">IGPS catalyzes the conversion of PRFAR and glutamine to IGP, AICAR and glutamate. The HisF subunit catalyzes the cyclization activity that produces IGP and AICAR from PRFAR using the ammonia provided by the HisH subunit.</text>
</comment>
<comment type="catalytic activity">
    <reaction evidence="1">
        <text>5-[(5-phospho-1-deoxy-D-ribulos-1-ylimino)methylamino]-1-(5-phospho-beta-D-ribosyl)imidazole-4-carboxamide + L-glutamine = D-erythro-1-(imidazol-4-yl)glycerol 3-phosphate + 5-amino-1-(5-phospho-beta-D-ribosyl)imidazole-4-carboxamide + L-glutamate + H(+)</text>
        <dbReference type="Rhea" id="RHEA:24793"/>
        <dbReference type="ChEBI" id="CHEBI:15378"/>
        <dbReference type="ChEBI" id="CHEBI:29985"/>
        <dbReference type="ChEBI" id="CHEBI:58278"/>
        <dbReference type="ChEBI" id="CHEBI:58359"/>
        <dbReference type="ChEBI" id="CHEBI:58475"/>
        <dbReference type="ChEBI" id="CHEBI:58525"/>
        <dbReference type="EC" id="4.3.2.10"/>
    </reaction>
</comment>
<comment type="pathway">
    <text evidence="1">Amino-acid biosynthesis; L-histidine biosynthesis; L-histidine from 5-phospho-alpha-D-ribose 1-diphosphate: step 5/9.</text>
</comment>
<comment type="subunit">
    <text evidence="1">Heterodimer of HisH and HisF.</text>
</comment>
<comment type="subcellular location">
    <subcellularLocation>
        <location evidence="1">Cytoplasm</location>
    </subcellularLocation>
</comment>
<comment type="similarity">
    <text evidence="1">Belongs to the HisA/HisF family.</text>
</comment>
<dbReference type="EC" id="4.3.2.10" evidence="1"/>
<dbReference type="EMBL" id="CP001011">
    <property type="protein sequence ID" value="ACB92765.1"/>
    <property type="molecule type" value="Genomic_DNA"/>
</dbReference>
<dbReference type="RefSeq" id="WP_004088319.1">
    <property type="nucleotide sequence ID" value="NC_010577.1"/>
</dbReference>
<dbReference type="SMR" id="B2I5X6"/>
<dbReference type="GeneID" id="93905073"/>
<dbReference type="KEGG" id="xfn:XfasM23_1347"/>
<dbReference type="HOGENOM" id="CLU_048577_4_0_6"/>
<dbReference type="UniPathway" id="UPA00031">
    <property type="reaction ID" value="UER00010"/>
</dbReference>
<dbReference type="Proteomes" id="UP000001698">
    <property type="component" value="Chromosome"/>
</dbReference>
<dbReference type="GO" id="GO:0005737">
    <property type="term" value="C:cytoplasm"/>
    <property type="evidence" value="ECO:0007669"/>
    <property type="project" value="UniProtKB-SubCell"/>
</dbReference>
<dbReference type="GO" id="GO:0000107">
    <property type="term" value="F:imidazoleglycerol-phosphate synthase activity"/>
    <property type="evidence" value="ECO:0007669"/>
    <property type="project" value="UniProtKB-UniRule"/>
</dbReference>
<dbReference type="GO" id="GO:0016829">
    <property type="term" value="F:lyase activity"/>
    <property type="evidence" value="ECO:0007669"/>
    <property type="project" value="UniProtKB-KW"/>
</dbReference>
<dbReference type="GO" id="GO:0000105">
    <property type="term" value="P:L-histidine biosynthetic process"/>
    <property type="evidence" value="ECO:0007669"/>
    <property type="project" value="UniProtKB-UniRule"/>
</dbReference>
<dbReference type="CDD" id="cd04731">
    <property type="entry name" value="HisF"/>
    <property type="match status" value="1"/>
</dbReference>
<dbReference type="FunFam" id="3.20.20.70:FF:000006">
    <property type="entry name" value="Imidazole glycerol phosphate synthase subunit HisF"/>
    <property type="match status" value="1"/>
</dbReference>
<dbReference type="Gene3D" id="3.20.20.70">
    <property type="entry name" value="Aldolase class I"/>
    <property type="match status" value="1"/>
</dbReference>
<dbReference type="HAMAP" id="MF_01013">
    <property type="entry name" value="HisF"/>
    <property type="match status" value="1"/>
</dbReference>
<dbReference type="InterPro" id="IPR013785">
    <property type="entry name" value="Aldolase_TIM"/>
</dbReference>
<dbReference type="InterPro" id="IPR006062">
    <property type="entry name" value="His_biosynth"/>
</dbReference>
<dbReference type="InterPro" id="IPR004651">
    <property type="entry name" value="HisF"/>
</dbReference>
<dbReference type="InterPro" id="IPR050064">
    <property type="entry name" value="IGPS_HisA/HisF"/>
</dbReference>
<dbReference type="InterPro" id="IPR011060">
    <property type="entry name" value="RibuloseP-bd_barrel"/>
</dbReference>
<dbReference type="NCBIfam" id="TIGR00735">
    <property type="entry name" value="hisF"/>
    <property type="match status" value="1"/>
</dbReference>
<dbReference type="PANTHER" id="PTHR21235:SF2">
    <property type="entry name" value="IMIDAZOLE GLYCEROL PHOSPHATE SYNTHASE HISHF"/>
    <property type="match status" value="1"/>
</dbReference>
<dbReference type="PANTHER" id="PTHR21235">
    <property type="entry name" value="IMIDAZOLE GLYCEROL PHOSPHATE SYNTHASE SUBUNIT HISF/H IGP SYNTHASE SUBUNIT HISF/H"/>
    <property type="match status" value="1"/>
</dbReference>
<dbReference type="Pfam" id="PF00977">
    <property type="entry name" value="His_biosynth"/>
    <property type="match status" value="1"/>
</dbReference>
<dbReference type="SUPFAM" id="SSF51366">
    <property type="entry name" value="Ribulose-phoshate binding barrel"/>
    <property type="match status" value="1"/>
</dbReference>
<keyword id="KW-0028">Amino-acid biosynthesis</keyword>
<keyword id="KW-0963">Cytoplasm</keyword>
<keyword id="KW-0368">Histidine biosynthesis</keyword>
<keyword id="KW-0456">Lyase</keyword>
<evidence type="ECO:0000255" key="1">
    <source>
        <dbReference type="HAMAP-Rule" id="MF_01013"/>
    </source>
</evidence>